<dbReference type="EC" id="2.8.1.-" evidence="1"/>
<dbReference type="EMBL" id="AE017282">
    <property type="protein sequence ID" value="AAU91060.1"/>
    <property type="molecule type" value="Genomic_DNA"/>
</dbReference>
<dbReference type="RefSeq" id="WP_010962075.1">
    <property type="nucleotide sequence ID" value="NC_002977.6"/>
</dbReference>
<dbReference type="SMR" id="Q603C7"/>
<dbReference type="STRING" id="243233.MCA2880"/>
<dbReference type="GeneID" id="88225053"/>
<dbReference type="KEGG" id="mca:MCA2880"/>
<dbReference type="eggNOG" id="COG0037">
    <property type="taxonomic scope" value="Bacteria"/>
</dbReference>
<dbReference type="HOGENOM" id="CLU_026481_0_0_6"/>
<dbReference type="Proteomes" id="UP000006821">
    <property type="component" value="Chromosome"/>
</dbReference>
<dbReference type="GO" id="GO:0005737">
    <property type="term" value="C:cytoplasm"/>
    <property type="evidence" value="ECO:0007669"/>
    <property type="project" value="UniProtKB-SubCell"/>
</dbReference>
<dbReference type="GO" id="GO:0051539">
    <property type="term" value="F:4 iron, 4 sulfur cluster binding"/>
    <property type="evidence" value="ECO:0007669"/>
    <property type="project" value="UniProtKB-UniRule"/>
</dbReference>
<dbReference type="GO" id="GO:0005524">
    <property type="term" value="F:ATP binding"/>
    <property type="evidence" value="ECO:0007669"/>
    <property type="project" value="UniProtKB-UniRule"/>
</dbReference>
<dbReference type="GO" id="GO:0000287">
    <property type="term" value="F:magnesium ion binding"/>
    <property type="evidence" value="ECO:0007669"/>
    <property type="project" value="UniProtKB-UniRule"/>
</dbReference>
<dbReference type="GO" id="GO:0016783">
    <property type="term" value="F:sulfurtransferase activity"/>
    <property type="evidence" value="ECO:0007669"/>
    <property type="project" value="UniProtKB-UniRule"/>
</dbReference>
<dbReference type="GO" id="GO:0000049">
    <property type="term" value="F:tRNA binding"/>
    <property type="evidence" value="ECO:0007669"/>
    <property type="project" value="UniProtKB-KW"/>
</dbReference>
<dbReference type="GO" id="GO:0034227">
    <property type="term" value="P:tRNA thio-modification"/>
    <property type="evidence" value="ECO:0007669"/>
    <property type="project" value="UniProtKB-UniRule"/>
</dbReference>
<dbReference type="CDD" id="cd24138">
    <property type="entry name" value="TtcA-like"/>
    <property type="match status" value="1"/>
</dbReference>
<dbReference type="Gene3D" id="3.40.50.620">
    <property type="entry name" value="HUPs"/>
    <property type="match status" value="1"/>
</dbReference>
<dbReference type="HAMAP" id="MF_01850">
    <property type="entry name" value="TtcA"/>
    <property type="match status" value="1"/>
</dbReference>
<dbReference type="InterPro" id="IPR014729">
    <property type="entry name" value="Rossmann-like_a/b/a_fold"/>
</dbReference>
<dbReference type="InterPro" id="IPR011063">
    <property type="entry name" value="TilS/TtcA_N"/>
</dbReference>
<dbReference type="InterPro" id="IPR012089">
    <property type="entry name" value="tRNA_Cyd_32_2_STrfase"/>
</dbReference>
<dbReference type="InterPro" id="IPR035107">
    <property type="entry name" value="tRNA_thiolation_TtcA_Ctu1"/>
</dbReference>
<dbReference type="NCBIfam" id="NF007972">
    <property type="entry name" value="PRK10696.1"/>
    <property type="match status" value="1"/>
</dbReference>
<dbReference type="PANTHER" id="PTHR43686:SF1">
    <property type="entry name" value="AMINOTRAN_5 DOMAIN-CONTAINING PROTEIN"/>
    <property type="match status" value="1"/>
</dbReference>
<dbReference type="PANTHER" id="PTHR43686">
    <property type="entry name" value="SULFURTRANSFERASE-RELATED"/>
    <property type="match status" value="1"/>
</dbReference>
<dbReference type="Pfam" id="PF01171">
    <property type="entry name" value="ATP_bind_3"/>
    <property type="match status" value="1"/>
</dbReference>
<dbReference type="PIRSF" id="PIRSF004976">
    <property type="entry name" value="ATPase_YdaO"/>
    <property type="match status" value="1"/>
</dbReference>
<dbReference type="SUPFAM" id="SSF52402">
    <property type="entry name" value="Adenine nucleotide alpha hydrolases-like"/>
    <property type="match status" value="1"/>
</dbReference>
<gene>
    <name evidence="1" type="primary">ttcA</name>
    <name type="ordered locus">MCA2880</name>
</gene>
<organism>
    <name type="scientific">Methylococcus capsulatus (strain ATCC 33009 / NCIMB 11132 / Bath)</name>
    <dbReference type="NCBI Taxonomy" id="243233"/>
    <lineage>
        <taxon>Bacteria</taxon>
        <taxon>Pseudomonadati</taxon>
        <taxon>Pseudomonadota</taxon>
        <taxon>Gammaproteobacteria</taxon>
        <taxon>Methylococcales</taxon>
        <taxon>Methylococcaceae</taxon>
        <taxon>Methylococcus</taxon>
    </lineage>
</organism>
<name>TTCA_METCA</name>
<accession>Q603C7</accession>
<evidence type="ECO:0000255" key="1">
    <source>
        <dbReference type="HAMAP-Rule" id="MF_01850"/>
    </source>
</evidence>
<reference key="1">
    <citation type="journal article" date="2004" name="PLoS Biol.">
        <title>Genomic insights into methanotrophy: the complete genome sequence of Methylococcus capsulatus (Bath).</title>
        <authorList>
            <person name="Ward N.L."/>
            <person name="Larsen O."/>
            <person name="Sakwa J."/>
            <person name="Bruseth L."/>
            <person name="Khouri H.M."/>
            <person name="Durkin A.S."/>
            <person name="Dimitrov G."/>
            <person name="Jiang L."/>
            <person name="Scanlan D."/>
            <person name="Kang K.H."/>
            <person name="Lewis M.R."/>
            <person name="Nelson K.E."/>
            <person name="Methe B.A."/>
            <person name="Wu M."/>
            <person name="Heidelberg J.F."/>
            <person name="Paulsen I.T."/>
            <person name="Fouts D.E."/>
            <person name="Ravel J."/>
            <person name="Tettelin H."/>
            <person name="Ren Q."/>
            <person name="Read T.D."/>
            <person name="DeBoy R.T."/>
            <person name="Seshadri R."/>
            <person name="Salzberg S.L."/>
            <person name="Jensen H.B."/>
            <person name="Birkeland N.K."/>
            <person name="Nelson W.C."/>
            <person name="Dodson R.J."/>
            <person name="Grindhaug S.H."/>
            <person name="Holt I.E."/>
            <person name="Eidhammer I."/>
            <person name="Jonasen I."/>
            <person name="Vanaken S."/>
            <person name="Utterback T.R."/>
            <person name="Feldblyum T.V."/>
            <person name="Fraser C.M."/>
            <person name="Lillehaug J.R."/>
            <person name="Eisen J.A."/>
        </authorList>
    </citation>
    <scope>NUCLEOTIDE SEQUENCE [LARGE SCALE GENOMIC DNA]</scope>
    <source>
        <strain>ATCC 33009 / NCIMB 11132 / Bath</strain>
    </source>
</reference>
<protein>
    <recommendedName>
        <fullName evidence="1">tRNA-cytidine(32) 2-sulfurtransferase</fullName>
        <ecNumber evidence="1">2.8.1.-</ecNumber>
    </recommendedName>
    <alternativeName>
        <fullName evidence="1">Two-thiocytidine biosynthesis protein A</fullName>
    </alternativeName>
    <alternativeName>
        <fullName evidence="1">tRNA 2-thiocytidine biosynthesis protein TtcA</fullName>
    </alternativeName>
</protein>
<proteinExistence type="inferred from homology"/>
<feature type="chain" id="PRO_0000348769" description="tRNA-cytidine(32) 2-sulfurtransferase">
    <location>
        <begin position="1"/>
        <end position="289"/>
    </location>
</feature>
<feature type="short sequence motif" description="PP-loop motif" evidence="1">
    <location>
        <begin position="49"/>
        <end position="54"/>
    </location>
</feature>
<feature type="binding site" evidence="1">
    <location>
        <position position="124"/>
    </location>
    <ligand>
        <name>[4Fe-4S] cluster</name>
        <dbReference type="ChEBI" id="CHEBI:49883"/>
    </ligand>
</feature>
<feature type="binding site" evidence="1">
    <location>
        <position position="127"/>
    </location>
    <ligand>
        <name>[4Fe-4S] cluster</name>
        <dbReference type="ChEBI" id="CHEBI:49883"/>
    </ligand>
</feature>
<feature type="binding site" evidence="1">
    <location>
        <position position="215"/>
    </location>
    <ligand>
        <name>[4Fe-4S] cluster</name>
        <dbReference type="ChEBI" id="CHEBI:49883"/>
    </ligand>
</feature>
<sequence length="289" mass="32543">MPANAAAPLYAKERYEFNKLQKRLRRLTGQAIADYGMIQEGDRVMVCLSGGKDSFTLLDILLKLRINAPVNFDLVAVNLDQKQPGFPADVLPNYLSEQGIPFHIIEQDTYSVVKSIIPEGKTTCGLCSRLRRGLLYRYAADHGITKIALGHHRDDILETFFLNLFYGGTLKAMPPKLLSDDRRHIVIRPLAYCKEEDIARYARIRAFPIIPCNLCGSQENLQRQAMKAMLKDWEKRHPGRVETVFTALQNVAPSQLADSRLFDFAALDSLRNTAETTPEHGAGLDILSR</sequence>
<comment type="function">
    <text evidence="1">Catalyzes the ATP-dependent 2-thiolation of cytidine in position 32 of tRNA, to form 2-thiocytidine (s(2)C32). The sulfur atoms are provided by the cysteine/cysteine desulfurase (IscS) system.</text>
</comment>
<comment type="catalytic activity">
    <reaction evidence="1">
        <text>cytidine(32) in tRNA + S-sulfanyl-L-cysteinyl-[cysteine desulfurase] + AH2 + ATP = 2-thiocytidine(32) in tRNA + L-cysteinyl-[cysteine desulfurase] + A + AMP + diphosphate + H(+)</text>
        <dbReference type="Rhea" id="RHEA:57048"/>
        <dbReference type="Rhea" id="RHEA-COMP:10288"/>
        <dbReference type="Rhea" id="RHEA-COMP:12157"/>
        <dbReference type="Rhea" id="RHEA-COMP:12158"/>
        <dbReference type="Rhea" id="RHEA-COMP:14821"/>
        <dbReference type="ChEBI" id="CHEBI:13193"/>
        <dbReference type="ChEBI" id="CHEBI:15378"/>
        <dbReference type="ChEBI" id="CHEBI:17499"/>
        <dbReference type="ChEBI" id="CHEBI:29950"/>
        <dbReference type="ChEBI" id="CHEBI:30616"/>
        <dbReference type="ChEBI" id="CHEBI:33019"/>
        <dbReference type="ChEBI" id="CHEBI:61963"/>
        <dbReference type="ChEBI" id="CHEBI:82748"/>
        <dbReference type="ChEBI" id="CHEBI:141453"/>
        <dbReference type="ChEBI" id="CHEBI:456215"/>
    </reaction>
    <physiologicalReaction direction="left-to-right" evidence="1">
        <dbReference type="Rhea" id="RHEA:57049"/>
    </physiologicalReaction>
</comment>
<comment type="cofactor">
    <cofactor evidence="1">
        <name>Mg(2+)</name>
        <dbReference type="ChEBI" id="CHEBI:18420"/>
    </cofactor>
</comment>
<comment type="cofactor">
    <cofactor evidence="1">
        <name>[4Fe-4S] cluster</name>
        <dbReference type="ChEBI" id="CHEBI:49883"/>
    </cofactor>
    <text evidence="1">Binds 1 [4Fe-4S] cluster per subunit. The cluster is chelated by three Cys residues, the fourth Fe has a free coordination site that may bind a sulfur atom transferred from the persulfide of IscS.</text>
</comment>
<comment type="pathway">
    <text evidence="1">tRNA modification.</text>
</comment>
<comment type="subunit">
    <text evidence="1">Homodimer.</text>
</comment>
<comment type="subcellular location">
    <subcellularLocation>
        <location evidence="1">Cytoplasm</location>
    </subcellularLocation>
</comment>
<comment type="miscellaneous">
    <text evidence="1">The thiolation reaction likely consists of two steps: a first activation step by ATP to form an adenylated intermediate of the target base of tRNA, and a second nucleophilic substitution step of the sulfur (S) atom supplied by the hydrosulfide attached to the Fe-S cluster.</text>
</comment>
<comment type="similarity">
    <text evidence="1">Belongs to the TtcA family.</text>
</comment>
<keyword id="KW-0004">4Fe-4S</keyword>
<keyword id="KW-0067">ATP-binding</keyword>
<keyword id="KW-0963">Cytoplasm</keyword>
<keyword id="KW-0408">Iron</keyword>
<keyword id="KW-0411">Iron-sulfur</keyword>
<keyword id="KW-0460">Magnesium</keyword>
<keyword id="KW-0479">Metal-binding</keyword>
<keyword id="KW-0547">Nucleotide-binding</keyword>
<keyword id="KW-1185">Reference proteome</keyword>
<keyword id="KW-0694">RNA-binding</keyword>
<keyword id="KW-0808">Transferase</keyword>
<keyword id="KW-0819">tRNA processing</keyword>
<keyword id="KW-0820">tRNA-binding</keyword>